<sequence length="314" mass="34736">MIKVVFMGTPDFSVPVLRRLIEDGYDVIGVVTQPDRPVGRKKVLTPTPVKVEAEKHGIPVLQPLRIREKDEYEKVLALEPDLIVTAAFGQIVPNEILEAPKYGCINVHASLLPELRGGAPIHYAIMEGKEKTGITIMYMVEKLDAGDILTQVEVEIEERETTGSLFDKLSEAGAHLLSKTVPLLIQGKLEPIKQNEEEVTFAYNIKREQEKIDWTKTGEEVYNHIRGLNPWPVAYTTLAGQVVKVWWGEKVPVTKSAEAGTIVAIEEDGFVVATGNETGVKITELQPSGKKRMSCSQFLRGTKPEIGTKLGENA</sequence>
<organism>
    <name type="scientific">Bacillus anthracis (strain A0248)</name>
    <dbReference type="NCBI Taxonomy" id="592021"/>
    <lineage>
        <taxon>Bacteria</taxon>
        <taxon>Bacillati</taxon>
        <taxon>Bacillota</taxon>
        <taxon>Bacilli</taxon>
        <taxon>Bacillales</taxon>
        <taxon>Bacillaceae</taxon>
        <taxon>Bacillus</taxon>
        <taxon>Bacillus cereus group</taxon>
    </lineage>
</organism>
<protein>
    <recommendedName>
        <fullName evidence="1">Methionyl-tRNA formyltransferase</fullName>
        <ecNumber evidence="1">2.1.2.9</ecNumber>
    </recommendedName>
</protein>
<name>FMT_BACAA</name>
<keyword id="KW-0648">Protein biosynthesis</keyword>
<keyword id="KW-0808">Transferase</keyword>
<feature type="chain" id="PRO_1000190003" description="Methionyl-tRNA formyltransferase">
    <location>
        <begin position="1"/>
        <end position="314"/>
    </location>
</feature>
<feature type="binding site" evidence="1">
    <location>
        <begin position="110"/>
        <end position="113"/>
    </location>
    <ligand>
        <name>(6S)-5,6,7,8-tetrahydrofolate</name>
        <dbReference type="ChEBI" id="CHEBI:57453"/>
    </ligand>
</feature>
<gene>
    <name evidence="1" type="primary">fmt</name>
    <name type="ordered locus">BAA_4028</name>
</gene>
<comment type="function">
    <text evidence="1">Attaches a formyl group to the free amino group of methionyl-tRNA(fMet). The formyl group appears to play a dual role in the initiator identity of N-formylmethionyl-tRNA by promoting its recognition by IF2 and preventing the misappropriation of this tRNA by the elongation apparatus.</text>
</comment>
<comment type="catalytic activity">
    <reaction evidence="1">
        <text>L-methionyl-tRNA(fMet) + (6R)-10-formyltetrahydrofolate = N-formyl-L-methionyl-tRNA(fMet) + (6S)-5,6,7,8-tetrahydrofolate + H(+)</text>
        <dbReference type="Rhea" id="RHEA:24380"/>
        <dbReference type="Rhea" id="RHEA-COMP:9952"/>
        <dbReference type="Rhea" id="RHEA-COMP:9953"/>
        <dbReference type="ChEBI" id="CHEBI:15378"/>
        <dbReference type="ChEBI" id="CHEBI:57453"/>
        <dbReference type="ChEBI" id="CHEBI:78530"/>
        <dbReference type="ChEBI" id="CHEBI:78844"/>
        <dbReference type="ChEBI" id="CHEBI:195366"/>
        <dbReference type="EC" id="2.1.2.9"/>
    </reaction>
</comment>
<comment type="similarity">
    <text evidence="1">Belongs to the Fmt family.</text>
</comment>
<proteinExistence type="inferred from homology"/>
<evidence type="ECO:0000255" key="1">
    <source>
        <dbReference type="HAMAP-Rule" id="MF_00182"/>
    </source>
</evidence>
<accession>C3P637</accession>
<reference key="1">
    <citation type="submission" date="2009-04" db="EMBL/GenBank/DDBJ databases">
        <title>Genome sequence of Bacillus anthracis A0248.</title>
        <authorList>
            <person name="Dodson R.J."/>
            <person name="Munk A.C."/>
            <person name="Bruce D."/>
            <person name="Detter C."/>
            <person name="Tapia R."/>
            <person name="Sutton G."/>
            <person name="Sims D."/>
            <person name="Brettin T."/>
        </authorList>
    </citation>
    <scope>NUCLEOTIDE SEQUENCE [LARGE SCALE GENOMIC DNA]</scope>
    <source>
        <strain>A0248</strain>
    </source>
</reference>
<dbReference type="EC" id="2.1.2.9" evidence="1"/>
<dbReference type="EMBL" id="CP001598">
    <property type="protein sequence ID" value="ACQ47237.1"/>
    <property type="molecule type" value="Genomic_DNA"/>
</dbReference>
<dbReference type="RefSeq" id="WP_000598790.1">
    <property type="nucleotide sequence ID" value="NC_012659.1"/>
</dbReference>
<dbReference type="SMR" id="C3P637"/>
<dbReference type="GeneID" id="45023695"/>
<dbReference type="KEGG" id="bai:BAA_4028"/>
<dbReference type="HOGENOM" id="CLU_033347_1_1_9"/>
<dbReference type="GO" id="GO:0005829">
    <property type="term" value="C:cytosol"/>
    <property type="evidence" value="ECO:0007669"/>
    <property type="project" value="TreeGrafter"/>
</dbReference>
<dbReference type="GO" id="GO:0004479">
    <property type="term" value="F:methionyl-tRNA formyltransferase activity"/>
    <property type="evidence" value="ECO:0007669"/>
    <property type="project" value="UniProtKB-UniRule"/>
</dbReference>
<dbReference type="CDD" id="cd08646">
    <property type="entry name" value="FMT_core_Met-tRNA-FMT_N"/>
    <property type="match status" value="1"/>
</dbReference>
<dbReference type="CDD" id="cd08704">
    <property type="entry name" value="Met_tRNA_FMT_C"/>
    <property type="match status" value="1"/>
</dbReference>
<dbReference type="FunFam" id="3.10.25.10:FF:000003">
    <property type="entry name" value="Methionyl-tRNA formyltransferase"/>
    <property type="match status" value="1"/>
</dbReference>
<dbReference type="FunFam" id="3.40.50.170:FF:000004">
    <property type="entry name" value="Methionyl-tRNA formyltransferase"/>
    <property type="match status" value="1"/>
</dbReference>
<dbReference type="Gene3D" id="3.10.25.10">
    <property type="entry name" value="Formyl transferase, C-terminal domain"/>
    <property type="match status" value="1"/>
</dbReference>
<dbReference type="Gene3D" id="3.40.50.170">
    <property type="entry name" value="Formyl transferase, N-terminal domain"/>
    <property type="match status" value="1"/>
</dbReference>
<dbReference type="HAMAP" id="MF_00182">
    <property type="entry name" value="Formyl_trans"/>
    <property type="match status" value="1"/>
</dbReference>
<dbReference type="InterPro" id="IPR005794">
    <property type="entry name" value="Fmt"/>
</dbReference>
<dbReference type="InterPro" id="IPR005793">
    <property type="entry name" value="Formyl_trans_C"/>
</dbReference>
<dbReference type="InterPro" id="IPR037022">
    <property type="entry name" value="Formyl_trans_C_sf"/>
</dbReference>
<dbReference type="InterPro" id="IPR002376">
    <property type="entry name" value="Formyl_transf_N"/>
</dbReference>
<dbReference type="InterPro" id="IPR036477">
    <property type="entry name" value="Formyl_transf_N_sf"/>
</dbReference>
<dbReference type="InterPro" id="IPR011034">
    <property type="entry name" value="Formyl_transferase-like_C_sf"/>
</dbReference>
<dbReference type="InterPro" id="IPR001555">
    <property type="entry name" value="GART_AS"/>
</dbReference>
<dbReference type="InterPro" id="IPR044135">
    <property type="entry name" value="Met-tRNA-FMT_C"/>
</dbReference>
<dbReference type="InterPro" id="IPR041711">
    <property type="entry name" value="Met-tRNA-FMT_N"/>
</dbReference>
<dbReference type="NCBIfam" id="TIGR00460">
    <property type="entry name" value="fmt"/>
    <property type="match status" value="1"/>
</dbReference>
<dbReference type="PANTHER" id="PTHR11138">
    <property type="entry name" value="METHIONYL-TRNA FORMYLTRANSFERASE"/>
    <property type="match status" value="1"/>
</dbReference>
<dbReference type="PANTHER" id="PTHR11138:SF5">
    <property type="entry name" value="METHIONYL-TRNA FORMYLTRANSFERASE, MITOCHONDRIAL"/>
    <property type="match status" value="1"/>
</dbReference>
<dbReference type="Pfam" id="PF02911">
    <property type="entry name" value="Formyl_trans_C"/>
    <property type="match status" value="1"/>
</dbReference>
<dbReference type="Pfam" id="PF00551">
    <property type="entry name" value="Formyl_trans_N"/>
    <property type="match status" value="1"/>
</dbReference>
<dbReference type="SUPFAM" id="SSF50486">
    <property type="entry name" value="FMT C-terminal domain-like"/>
    <property type="match status" value="1"/>
</dbReference>
<dbReference type="SUPFAM" id="SSF53328">
    <property type="entry name" value="Formyltransferase"/>
    <property type="match status" value="1"/>
</dbReference>
<dbReference type="PROSITE" id="PS00373">
    <property type="entry name" value="GART"/>
    <property type="match status" value="1"/>
</dbReference>